<accession>P0ACU7</accession>
<accession>P36656</accession>
<accession>Q2M6G9</accession>
<accession>Q47128</accession>
<organism>
    <name type="scientific">Escherichia coli (strain K12)</name>
    <dbReference type="NCBI Taxonomy" id="83333"/>
    <lineage>
        <taxon>Bacteria</taxon>
        <taxon>Pseudomonadati</taxon>
        <taxon>Pseudomonadota</taxon>
        <taxon>Gammaproteobacteria</taxon>
        <taxon>Enterobacterales</taxon>
        <taxon>Enterobacteriaceae</taxon>
        <taxon>Escherichia</taxon>
    </lineage>
</organism>
<dbReference type="EMBL" id="Z36905">
    <property type="protein sequence ID" value="CAA85376.1"/>
    <property type="status" value="ALT_INIT"/>
    <property type="molecule type" value="Genomic_DNA"/>
</dbReference>
<dbReference type="EMBL" id="X77707">
    <property type="protein sequence ID" value="CAA54782.1"/>
    <property type="molecule type" value="Genomic_DNA"/>
</dbReference>
<dbReference type="EMBL" id="U14003">
    <property type="protein sequence ID" value="AAA97034.1"/>
    <property type="status" value="ALT_INIT"/>
    <property type="molecule type" value="Genomic_DNA"/>
</dbReference>
<dbReference type="EMBL" id="U00096">
    <property type="protein sequence ID" value="AAC77095.2"/>
    <property type="molecule type" value="Genomic_DNA"/>
</dbReference>
<dbReference type="EMBL" id="AP009048">
    <property type="protein sequence ID" value="BAE78137.1"/>
    <property type="molecule type" value="Genomic_DNA"/>
</dbReference>
<dbReference type="EMBL" id="M67452">
    <property type="status" value="NOT_ANNOTATED_CDS"/>
    <property type="molecule type" value="Genomic_DNA"/>
</dbReference>
<dbReference type="RefSeq" id="NP_418558.2">
    <property type="nucleotide sequence ID" value="NC_000913.3"/>
</dbReference>
<dbReference type="RefSeq" id="WP_001188520.1">
    <property type="nucleotide sequence ID" value="NZ_STEB01000014.1"/>
</dbReference>
<dbReference type="SMR" id="P0ACU7"/>
<dbReference type="BioGRID" id="4262690">
    <property type="interactions" value="80"/>
</dbReference>
<dbReference type="DIP" id="DIP-48209N"/>
<dbReference type="FunCoup" id="P0ACU7">
    <property type="interactions" value="42"/>
</dbReference>
<dbReference type="STRING" id="511145.b4135"/>
<dbReference type="jPOST" id="P0ACU7"/>
<dbReference type="PaxDb" id="511145-b4135"/>
<dbReference type="EnsemblBacteria" id="AAC77095">
    <property type="protein sequence ID" value="AAC77095"/>
    <property type="gene ID" value="b4135"/>
</dbReference>
<dbReference type="GeneID" id="948650"/>
<dbReference type="KEGG" id="ecj:JW5733"/>
<dbReference type="KEGG" id="eco:b4135"/>
<dbReference type="KEGG" id="ecoc:C3026_22350"/>
<dbReference type="PATRIC" id="fig|1411691.4.peg.2565"/>
<dbReference type="EchoBASE" id="EB2093"/>
<dbReference type="eggNOG" id="COG1309">
    <property type="taxonomic scope" value="Bacteria"/>
</dbReference>
<dbReference type="HOGENOM" id="CLU_1389758_0_0_6"/>
<dbReference type="InParanoid" id="P0ACU7"/>
<dbReference type="OMA" id="IWRRQLM"/>
<dbReference type="OrthoDB" id="6488705at2"/>
<dbReference type="PhylomeDB" id="P0ACU7"/>
<dbReference type="BioCyc" id="EcoCyc:EG12176-MONOMER"/>
<dbReference type="PRO" id="PR:P0ACU7"/>
<dbReference type="Proteomes" id="UP000000625">
    <property type="component" value="Chromosome"/>
</dbReference>
<dbReference type="GO" id="GO:0003677">
    <property type="term" value="F:DNA binding"/>
    <property type="evidence" value="ECO:0007669"/>
    <property type="project" value="UniProtKB-KW"/>
</dbReference>
<dbReference type="GO" id="GO:0045892">
    <property type="term" value="P:negative regulation of DNA-templated transcription"/>
    <property type="evidence" value="ECO:0000318"/>
    <property type="project" value="GO_Central"/>
</dbReference>
<dbReference type="Gene3D" id="1.10.357.10">
    <property type="entry name" value="Tetracycline Repressor, domain 2"/>
    <property type="match status" value="1"/>
</dbReference>
<dbReference type="InterPro" id="IPR009057">
    <property type="entry name" value="Homeodomain-like_sf"/>
</dbReference>
<dbReference type="InterPro" id="IPR001647">
    <property type="entry name" value="HTH_TetR"/>
</dbReference>
<dbReference type="InterPro" id="IPR036271">
    <property type="entry name" value="Tet_transcr_reg_TetR-rel_C_sf"/>
</dbReference>
<dbReference type="NCBIfam" id="NF008647">
    <property type="entry name" value="PRK11640.1"/>
    <property type="match status" value="1"/>
</dbReference>
<dbReference type="NCBIfam" id="NF047866">
    <property type="entry name" value="TF_DicD_YjdC"/>
    <property type="match status" value="1"/>
</dbReference>
<dbReference type="PANTHER" id="PTHR47506:SF1">
    <property type="entry name" value="HTH-TYPE TRANSCRIPTIONAL REGULATOR YJDC"/>
    <property type="match status" value="1"/>
</dbReference>
<dbReference type="PANTHER" id="PTHR47506">
    <property type="entry name" value="TRANSCRIPTIONAL REGULATORY PROTEIN"/>
    <property type="match status" value="1"/>
</dbReference>
<dbReference type="SUPFAM" id="SSF46689">
    <property type="entry name" value="Homeodomain-like"/>
    <property type="match status" value="1"/>
</dbReference>
<dbReference type="SUPFAM" id="SSF48498">
    <property type="entry name" value="Tetracyclin repressor-like, C-terminal domain"/>
    <property type="match status" value="1"/>
</dbReference>
<dbReference type="PROSITE" id="PS50977">
    <property type="entry name" value="HTH_TETR_2"/>
    <property type="match status" value="1"/>
</dbReference>
<evidence type="ECO:0000255" key="1">
    <source>
        <dbReference type="PROSITE-ProRule" id="PRU00335"/>
    </source>
</evidence>
<evidence type="ECO:0000305" key="2"/>
<reference key="1">
    <citation type="journal article" date="1995" name="Mol. Microbiol.">
        <title>Molecular genetics of a chromosomal locus involved in copper tolerance in Escherichia coli K-12.</title>
        <authorList>
            <person name="Fong S.-T."/>
            <person name="Camakaris J."/>
            <person name="Lee B.T.O."/>
        </authorList>
    </citation>
    <scope>NUCLEOTIDE SEQUENCE [GENOMIC DNA]</scope>
    <source>
        <strain>K12 / W3110 / ATCC 27325 / DSM 5911</strain>
    </source>
</reference>
<reference key="2">
    <citation type="journal article" date="1995" name="Mol. Microbiol.">
        <title>The biogenesis of c-type cytochromes in Escherichia coli requires a membrane-bound protein, DipZ, with a protein disulphide isomerase-like domain.</title>
        <authorList>
            <person name="Crooke H.R."/>
            <person name="Cole J.A."/>
        </authorList>
    </citation>
    <scope>NUCLEOTIDE SEQUENCE [GENOMIC DNA]</scope>
    <source>
        <strain>K12</strain>
    </source>
</reference>
<reference key="3">
    <citation type="journal article" date="1995" name="Nucleic Acids Res.">
        <title>Analysis of the Escherichia coli genome VI: DNA sequence of the region from 92.8 through 100 minutes.</title>
        <authorList>
            <person name="Burland V.D."/>
            <person name="Plunkett G. III"/>
            <person name="Sofia H.J."/>
            <person name="Daniels D.L."/>
            <person name="Blattner F.R."/>
        </authorList>
    </citation>
    <scope>NUCLEOTIDE SEQUENCE [LARGE SCALE GENOMIC DNA]</scope>
    <source>
        <strain>K12 / MG1655 / ATCC 47076</strain>
    </source>
</reference>
<reference key="4">
    <citation type="journal article" date="1997" name="Science">
        <title>The complete genome sequence of Escherichia coli K-12.</title>
        <authorList>
            <person name="Blattner F.R."/>
            <person name="Plunkett G. III"/>
            <person name="Bloch C.A."/>
            <person name="Perna N.T."/>
            <person name="Burland V."/>
            <person name="Riley M."/>
            <person name="Collado-Vides J."/>
            <person name="Glasner J.D."/>
            <person name="Rode C.K."/>
            <person name="Mayhew G.F."/>
            <person name="Gregor J."/>
            <person name="Davis N.W."/>
            <person name="Kirkpatrick H.A."/>
            <person name="Goeden M.A."/>
            <person name="Rose D.J."/>
            <person name="Mau B."/>
            <person name="Shao Y."/>
        </authorList>
    </citation>
    <scope>NUCLEOTIDE SEQUENCE [LARGE SCALE GENOMIC DNA]</scope>
    <source>
        <strain>K12 / MG1655 / ATCC 47076</strain>
    </source>
</reference>
<reference key="5">
    <citation type="journal article" date="2006" name="Mol. Syst. Biol.">
        <title>Highly accurate genome sequences of Escherichia coli K-12 strains MG1655 and W3110.</title>
        <authorList>
            <person name="Hayashi K."/>
            <person name="Morooka N."/>
            <person name="Yamamoto Y."/>
            <person name="Fujita K."/>
            <person name="Isono K."/>
            <person name="Choi S."/>
            <person name="Ohtsubo E."/>
            <person name="Baba T."/>
            <person name="Wanner B.L."/>
            <person name="Mori H."/>
            <person name="Horiuchi T."/>
        </authorList>
    </citation>
    <scope>NUCLEOTIDE SEQUENCE [LARGE SCALE GENOMIC DNA]</scope>
    <source>
        <strain>K12 / W3110 / ATCC 27325 / DSM 5911</strain>
    </source>
</reference>
<reference key="6">
    <citation type="journal article" date="1992" name="J. Bacteriol.">
        <title>Identification of elements involved in transcriptional regulation of the Escherichia coli cad operon by external pH.</title>
        <authorList>
            <person name="Watson N."/>
            <person name="Dunyak D.S."/>
            <person name="Rosey E.L."/>
            <person name="Slonczewski J.L."/>
            <person name="Olson E.R."/>
        </authorList>
    </citation>
    <scope>NUCLEOTIDE SEQUENCE [GENOMIC DNA] OF 168-191</scope>
</reference>
<name>YJDC_ECOLI</name>
<comment type="sequence caution" evidence="2">
    <conflict type="erroneous initiation">
        <sequence resource="EMBL-CDS" id="AAA97034"/>
    </conflict>
    <text>Extended N-terminus.</text>
</comment>
<comment type="sequence caution" evidence="2">
    <conflict type="erroneous initiation">
        <sequence resource="EMBL-CDS" id="CAA85376"/>
    </conflict>
    <text>Extended N-terminus.</text>
</comment>
<feature type="chain" id="PRO_0000070644" description="HTH-type transcriptional regulator YjdC">
    <location>
        <begin position="1"/>
        <end position="191"/>
    </location>
</feature>
<feature type="domain" description="HTH tetR-type" evidence="1">
    <location>
        <begin position="1"/>
        <end position="60"/>
    </location>
</feature>
<keyword id="KW-0238">DNA-binding</keyword>
<keyword id="KW-1185">Reference proteome</keyword>
<keyword id="KW-0804">Transcription</keyword>
<keyword id="KW-0805">Transcription regulation</keyword>
<proteinExistence type="predicted"/>
<sequence length="191" mass="21931">MQREDVLGEALKLLELQGIANTTLEMVAERVDYPLDELRRFWPDKEAILYDALRYLSQQIDVWRRQLMLDETQTAEQKLLARYQALSECVKNNRYPGCLFIAACTFYPDPGHPIHQLADQQKSAAYDFTHELLTTLEVDDPAMVAKQMELVLEGCLSRMLVNRSQADVDTAHRLAEDILRFARCRQGGALT</sequence>
<protein>
    <recommendedName>
        <fullName>HTH-type transcriptional regulator YjdC</fullName>
    </recommendedName>
</protein>
<gene>
    <name type="primary">yjdC</name>
    <name type="synonym">cutA3</name>
    <name type="ordered locus">b4135</name>
    <name type="ordered locus">JW5733</name>
</gene>